<comment type="subcellular location">
    <subcellularLocation>
        <location evidence="2">Cell membrane</location>
        <topology evidence="2">Multi-pass membrane protein</topology>
    </subcellularLocation>
</comment>
<reference key="1">
    <citation type="journal article" date="1995" name="Science">
        <title>Whole-genome random sequencing and assembly of Haemophilus influenzae Rd.</title>
        <authorList>
            <person name="Fleischmann R.D."/>
            <person name="Adams M.D."/>
            <person name="White O."/>
            <person name="Clayton R.A."/>
            <person name="Kirkness E.F."/>
            <person name="Kerlavage A.R."/>
            <person name="Bult C.J."/>
            <person name="Tomb J.-F."/>
            <person name="Dougherty B.A."/>
            <person name="Merrick J.M."/>
            <person name="McKenney K."/>
            <person name="Sutton G.G."/>
            <person name="FitzHugh W."/>
            <person name="Fields C.A."/>
            <person name="Gocayne J.D."/>
            <person name="Scott J.D."/>
            <person name="Shirley R."/>
            <person name="Liu L.-I."/>
            <person name="Glodek A."/>
            <person name="Kelley J.M."/>
            <person name="Weidman J.F."/>
            <person name="Phillips C.A."/>
            <person name="Spriggs T."/>
            <person name="Hedblom E."/>
            <person name="Cotton M.D."/>
            <person name="Utterback T.R."/>
            <person name="Hanna M.C."/>
            <person name="Nguyen D.T."/>
            <person name="Saudek D.M."/>
            <person name="Brandon R.C."/>
            <person name="Fine L.D."/>
            <person name="Fritchman J.L."/>
            <person name="Fuhrmann J.L."/>
            <person name="Geoghagen N.S.M."/>
            <person name="Gnehm C.L."/>
            <person name="McDonald L.A."/>
            <person name="Small K.V."/>
            <person name="Fraser C.M."/>
            <person name="Smith H.O."/>
            <person name="Venter J.C."/>
        </authorList>
    </citation>
    <scope>NUCLEOTIDE SEQUENCE [LARGE SCALE GENOMIC DNA]</scope>
    <source>
        <strain>ATCC 51907 / DSM 11121 / KW20 / Rd</strain>
    </source>
</reference>
<feature type="chain" id="PRO_0000077924" description="Uncharacterized protein HI_0453">
    <location>
        <begin position="1"/>
        <end position="174"/>
    </location>
</feature>
<feature type="transmembrane region" description="Helical" evidence="1">
    <location>
        <begin position="8"/>
        <end position="28"/>
    </location>
</feature>
<feature type="transmembrane region" description="Helical" evidence="1">
    <location>
        <begin position="146"/>
        <end position="166"/>
    </location>
</feature>
<evidence type="ECO:0000255" key="1"/>
<evidence type="ECO:0000305" key="2"/>
<gene>
    <name type="ordered locus">HI_0453</name>
</gene>
<accession>P43999</accession>
<dbReference type="EMBL" id="L42023">
    <property type="protein sequence ID" value="AAC22111.1"/>
    <property type="molecule type" value="Genomic_DNA"/>
</dbReference>
<dbReference type="PIR" id="H64007">
    <property type="entry name" value="H64007"/>
</dbReference>
<dbReference type="RefSeq" id="NP_438614.1">
    <property type="nucleotide sequence ID" value="NC_000907.1"/>
</dbReference>
<dbReference type="STRING" id="71421.HI_0453"/>
<dbReference type="EnsemblBacteria" id="AAC22111">
    <property type="protein sequence ID" value="AAC22111"/>
    <property type="gene ID" value="HI_0453"/>
</dbReference>
<dbReference type="KEGG" id="hin:HI_0453"/>
<dbReference type="PATRIC" id="fig|71421.8.peg.473"/>
<dbReference type="eggNOG" id="ENOG5032VK6">
    <property type="taxonomic scope" value="Bacteria"/>
</dbReference>
<dbReference type="HOGENOM" id="CLU_112460_0_0_6"/>
<dbReference type="OrthoDB" id="5354324at2"/>
<dbReference type="PhylomeDB" id="P43999"/>
<dbReference type="BioCyc" id="HINF71421:G1GJ1-469-MONOMER"/>
<dbReference type="Proteomes" id="UP000000579">
    <property type="component" value="Chromosome"/>
</dbReference>
<dbReference type="GO" id="GO:0005886">
    <property type="term" value="C:plasma membrane"/>
    <property type="evidence" value="ECO:0007669"/>
    <property type="project" value="UniProtKB-SubCell"/>
</dbReference>
<dbReference type="InterPro" id="IPR011088">
    <property type="entry name" value="Phage_phiNM3_A0EWY4"/>
</dbReference>
<dbReference type="Pfam" id="PF07509">
    <property type="entry name" value="DUF1523"/>
    <property type="match status" value="1"/>
</dbReference>
<proteinExistence type="predicted"/>
<keyword id="KW-1003">Cell membrane</keyword>
<keyword id="KW-0472">Membrane</keyword>
<keyword id="KW-1185">Reference proteome</keyword>
<keyword id="KW-0812">Transmembrane</keyword>
<keyword id="KW-1133">Transmembrane helix</keyword>
<protein>
    <recommendedName>
        <fullName>Uncharacterized protein HI_0453</fullName>
    </recommendedName>
</protein>
<name>Y453_HAEIN</name>
<organism>
    <name type="scientific">Haemophilus influenzae (strain ATCC 51907 / DSM 11121 / KW20 / Rd)</name>
    <dbReference type="NCBI Taxonomy" id="71421"/>
    <lineage>
        <taxon>Bacteria</taxon>
        <taxon>Pseudomonadati</taxon>
        <taxon>Pseudomonadota</taxon>
        <taxon>Gammaproteobacteria</taxon>
        <taxon>Pasteurellales</taxon>
        <taxon>Pasteurellaceae</taxon>
        <taxon>Haemophilus</taxon>
    </lineage>
</organism>
<sequence length="174" mass="20416">MRKFFKYFLFIVVFLFHGFMFSVVNYVFPHYDVTRVTGVEVKRVDKDGPITKSNPADGPTRDVYYINTQNDDGKIMVYRNEDTRWGFPFYFKFGSANLQAEAQALGNDNKLVQIKYYGWRITMVDEYRNATSIKEITADDTPSNPIVSWILYVFLLATLFLSIQFIRGWFDSDK</sequence>